<reference key="1">
    <citation type="journal article" date="2007" name="J. Bacteriol.">
        <title>Complete genome of acute rheumatic fever-associated serotype M5 Streptococcus pyogenes strain Manfredo.</title>
        <authorList>
            <person name="Holden M.T.G."/>
            <person name="Scott A."/>
            <person name="Cherevach I."/>
            <person name="Chillingworth T."/>
            <person name="Churcher C."/>
            <person name="Cronin A."/>
            <person name="Dowd L."/>
            <person name="Feltwell T."/>
            <person name="Hamlin N."/>
            <person name="Holroyd S."/>
            <person name="Jagels K."/>
            <person name="Moule S."/>
            <person name="Mungall K."/>
            <person name="Quail M.A."/>
            <person name="Price C."/>
            <person name="Rabbinowitsch E."/>
            <person name="Sharp S."/>
            <person name="Skelton J."/>
            <person name="Whitehead S."/>
            <person name="Barrell B.G."/>
            <person name="Kehoe M."/>
            <person name="Parkhill J."/>
        </authorList>
    </citation>
    <scope>NUCLEOTIDE SEQUENCE [LARGE SCALE GENOMIC DNA]</scope>
    <source>
        <strain>Manfredo</strain>
    </source>
</reference>
<sequence>MARVKGGVVSRKRRKRILKLAKGYYGAKHILFRTAKEQVMNSYYYAYRDRRQKKRDFRKLWITRINAAARMNGLSYSQLMHGLKLAEIEVNRKMLADLAVADAAAFTALADAAKAKLGK</sequence>
<proteinExistence type="inferred from homology"/>
<comment type="function">
    <text evidence="1">Binds directly to 23S ribosomal RNA and is necessary for the in vitro assembly process of the 50S ribosomal subunit. It is not involved in the protein synthesizing functions of that subunit.</text>
</comment>
<comment type="similarity">
    <text evidence="1">Belongs to the bacterial ribosomal protein bL20 family.</text>
</comment>
<organism>
    <name type="scientific">Streptococcus pyogenes serotype M5 (strain Manfredo)</name>
    <dbReference type="NCBI Taxonomy" id="160491"/>
    <lineage>
        <taxon>Bacteria</taxon>
        <taxon>Bacillati</taxon>
        <taxon>Bacillota</taxon>
        <taxon>Bacilli</taxon>
        <taxon>Lactobacillales</taxon>
        <taxon>Streptococcaceae</taxon>
        <taxon>Streptococcus</taxon>
    </lineage>
</organism>
<protein>
    <recommendedName>
        <fullName evidence="1">Large ribosomal subunit protein bL20</fullName>
    </recommendedName>
    <alternativeName>
        <fullName evidence="2">50S ribosomal protein L20</fullName>
    </alternativeName>
</protein>
<feature type="chain" id="PRO_1000049087" description="Large ribosomal subunit protein bL20">
    <location>
        <begin position="1"/>
        <end position="119"/>
    </location>
</feature>
<dbReference type="EMBL" id="AM295007">
    <property type="protein sequence ID" value="CAM30511.1"/>
    <property type="molecule type" value="Genomic_DNA"/>
</dbReference>
<dbReference type="RefSeq" id="WP_002985149.1">
    <property type="nucleotide sequence ID" value="NC_009332.1"/>
</dbReference>
<dbReference type="SMR" id="A2RF82"/>
<dbReference type="GeneID" id="69901075"/>
<dbReference type="KEGG" id="spf:SpyM51186"/>
<dbReference type="HOGENOM" id="CLU_123265_0_1_9"/>
<dbReference type="GO" id="GO:1990904">
    <property type="term" value="C:ribonucleoprotein complex"/>
    <property type="evidence" value="ECO:0007669"/>
    <property type="project" value="UniProtKB-KW"/>
</dbReference>
<dbReference type="GO" id="GO:0005840">
    <property type="term" value="C:ribosome"/>
    <property type="evidence" value="ECO:0007669"/>
    <property type="project" value="UniProtKB-KW"/>
</dbReference>
<dbReference type="GO" id="GO:0019843">
    <property type="term" value="F:rRNA binding"/>
    <property type="evidence" value="ECO:0007669"/>
    <property type="project" value="UniProtKB-UniRule"/>
</dbReference>
<dbReference type="GO" id="GO:0003735">
    <property type="term" value="F:structural constituent of ribosome"/>
    <property type="evidence" value="ECO:0007669"/>
    <property type="project" value="InterPro"/>
</dbReference>
<dbReference type="GO" id="GO:0000027">
    <property type="term" value="P:ribosomal large subunit assembly"/>
    <property type="evidence" value="ECO:0007669"/>
    <property type="project" value="UniProtKB-UniRule"/>
</dbReference>
<dbReference type="GO" id="GO:0006412">
    <property type="term" value="P:translation"/>
    <property type="evidence" value="ECO:0007669"/>
    <property type="project" value="InterPro"/>
</dbReference>
<dbReference type="CDD" id="cd07026">
    <property type="entry name" value="Ribosomal_L20"/>
    <property type="match status" value="1"/>
</dbReference>
<dbReference type="FunFam" id="1.10.1900.20:FF:000001">
    <property type="entry name" value="50S ribosomal protein L20"/>
    <property type="match status" value="1"/>
</dbReference>
<dbReference type="Gene3D" id="6.10.160.10">
    <property type="match status" value="1"/>
</dbReference>
<dbReference type="Gene3D" id="1.10.1900.20">
    <property type="entry name" value="Ribosomal protein L20"/>
    <property type="match status" value="1"/>
</dbReference>
<dbReference type="HAMAP" id="MF_00382">
    <property type="entry name" value="Ribosomal_bL20"/>
    <property type="match status" value="1"/>
</dbReference>
<dbReference type="InterPro" id="IPR005813">
    <property type="entry name" value="Ribosomal_bL20"/>
</dbReference>
<dbReference type="InterPro" id="IPR049946">
    <property type="entry name" value="RIBOSOMAL_L20_CS"/>
</dbReference>
<dbReference type="InterPro" id="IPR035566">
    <property type="entry name" value="Ribosomal_protein_bL20_C"/>
</dbReference>
<dbReference type="NCBIfam" id="TIGR01032">
    <property type="entry name" value="rplT_bact"/>
    <property type="match status" value="1"/>
</dbReference>
<dbReference type="PANTHER" id="PTHR10986">
    <property type="entry name" value="39S RIBOSOMAL PROTEIN L20"/>
    <property type="match status" value="1"/>
</dbReference>
<dbReference type="Pfam" id="PF00453">
    <property type="entry name" value="Ribosomal_L20"/>
    <property type="match status" value="1"/>
</dbReference>
<dbReference type="PRINTS" id="PR00062">
    <property type="entry name" value="RIBOSOMALL20"/>
</dbReference>
<dbReference type="SUPFAM" id="SSF74731">
    <property type="entry name" value="Ribosomal protein L20"/>
    <property type="match status" value="1"/>
</dbReference>
<dbReference type="PROSITE" id="PS00937">
    <property type="entry name" value="RIBOSOMAL_L20"/>
    <property type="match status" value="1"/>
</dbReference>
<evidence type="ECO:0000255" key="1">
    <source>
        <dbReference type="HAMAP-Rule" id="MF_00382"/>
    </source>
</evidence>
<evidence type="ECO:0000305" key="2"/>
<keyword id="KW-0687">Ribonucleoprotein</keyword>
<keyword id="KW-0689">Ribosomal protein</keyword>
<keyword id="KW-0694">RNA-binding</keyword>
<keyword id="KW-0699">rRNA-binding</keyword>
<gene>
    <name evidence="1" type="primary">rplT</name>
    <name type="ordered locus">SpyM51186</name>
</gene>
<accession>A2RF82</accession>
<name>RL20_STRPG</name>